<organism>
    <name type="scientific">Cereibacter sphaeroides (strain ATCC 17023 / DSM 158 / JCM 6121 / CCUG 31486 / LMG 2827 / NBRC 12203 / NCIMB 8253 / ATH 2.4.1.)</name>
    <name type="common">Rhodobacter sphaeroides</name>
    <dbReference type="NCBI Taxonomy" id="272943"/>
    <lineage>
        <taxon>Bacteria</taxon>
        <taxon>Pseudomonadati</taxon>
        <taxon>Pseudomonadota</taxon>
        <taxon>Alphaproteobacteria</taxon>
        <taxon>Rhodobacterales</taxon>
        <taxon>Paracoccaceae</taxon>
        <taxon>Cereibacter</taxon>
    </lineage>
</organism>
<protein>
    <recommendedName>
        <fullName evidence="1">Large ribosomal subunit protein bL9</fullName>
    </recommendedName>
    <alternativeName>
        <fullName evidence="2">50S ribosomal protein L9</fullName>
    </alternativeName>
</protein>
<name>RL9_CERS4</name>
<dbReference type="EMBL" id="CP000143">
    <property type="protein sequence ID" value="ABA79315.1"/>
    <property type="molecule type" value="Genomic_DNA"/>
</dbReference>
<dbReference type="RefSeq" id="WP_011338021.1">
    <property type="nucleotide sequence ID" value="NZ_CP030271.1"/>
</dbReference>
<dbReference type="RefSeq" id="YP_353216.1">
    <property type="nucleotide sequence ID" value="NC_007493.2"/>
</dbReference>
<dbReference type="SMR" id="Q3J1L9"/>
<dbReference type="STRING" id="272943.RSP_0141"/>
<dbReference type="EnsemblBacteria" id="ABA79315">
    <property type="protein sequence ID" value="ABA79315"/>
    <property type="gene ID" value="RSP_0141"/>
</dbReference>
<dbReference type="GeneID" id="3719561"/>
<dbReference type="KEGG" id="rsp:RSP_0141"/>
<dbReference type="PATRIC" id="fig|272943.9.peg.2081"/>
<dbReference type="eggNOG" id="COG0359">
    <property type="taxonomic scope" value="Bacteria"/>
</dbReference>
<dbReference type="OrthoDB" id="9788336at2"/>
<dbReference type="PhylomeDB" id="Q3J1L9"/>
<dbReference type="Proteomes" id="UP000002703">
    <property type="component" value="Chromosome 1"/>
</dbReference>
<dbReference type="GO" id="GO:1990904">
    <property type="term" value="C:ribonucleoprotein complex"/>
    <property type="evidence" value="ECO:0007669"/>
    <property type="project" value="UniProtKB-KW"/>
</dbReference>
<dbReference type="GO" id="GO:0005840">
    <property type="term" value="C:ribosome"/>
    <property type="evidence" value="ECO:0007669"/>
    <property type="project" value="UniProtKB-KW"/>
</dbReference>
<dbReference type="GO" id="GO:0019843">
    <property type="term" value="F:rRNA binding"/>
    <property type="evidence" value="ECO:0007669"/>
    <property type="project" value="UniProtKB-UniRule"/>
</dbReference>
<dbReference type="GO" id="GO:0003735">
    <property type="term" value="F:structural constituent of ribosome"/>
    <property type="evidence" value="ECO:0007669"/>
    <property type="project" value="InterPro"/>
</dbReference>
<dbReference type="GO" id="GO:0006412">
    <property type="term" value="P:translation"/>
    <property type="evidence" value="ECO:0007669"/>
    <property type="project" value="UniProtKB-UniRule"/>
</dbReference>
<dbReference type="Gene3D" id="3.10.430.100">
    <property type="entry name" value="Ribosomal protein L9, C-terminal domain"/>
    <property type="match status" value="1"/>
</dbReference>
<dbReference type="Gene3D" id="3.40.5.10">
    <property type="entry name" value="Ribosomal protein L9, N-terminal domain"/>
    <property type="match status" value="1"/>
</dbReference>
<dbReference type="HAMAP" id="MF_00503">
    <property type="entry name" value="Ribosomal_bL9"/>
    <property type="match status" value="1"/>
</dbReference>
<dbReference type="InterPro" id="IPR000244">
    <property type="entry name" value="Ribosomal_bL9"/>
</dbReference>
<dbReference type="InterPro" id="IPR009027">
    <property type="entry name" value="Ribosomal_bL9/RNase_H1_N"/>
</dbReference>
<dbReference type="InterPro" id="IPR020594">
    <property type="entry name" value="Ribosomal_bL9_bac/chp"/>
</dbReference>
<dbReference type="InterPro" id="IPR020069">
    <property type="entry name" value="Ribosomal_bL9_C"/>
</dbReference>
<dbReference type="InterPro" id="IPR036791">
    <property type="entry name" value="Ribosomal_bL9_C_sf"/>
</dbReference>
<dbReference type="InterPro" id="IPR020070">
    <property type="entry name" value="Ribosomal_bL9_N"/>
</dbReference>
<dbReference type="InterPro" id="IPR036935">
    <property type="entry name" value="Ribosomal_bL9_N_sf"/>
</dbReference>
<dbReference type="NCBIfam" id="TIGR00158">
    <property type="entry name" value="L9"/>
    <property type="match status" value="1"/>
</dbReference>
<dbReference type="PANTHER" id="PTHR21368">
    <property type="entry name" value="50S RIBOSOMAL PROTEIN L9"/>
    <property type="match status" value="1"/>
</dbReference>
<dbReference type="Pfam" id="PF03948">
    <property type="entry name" value="Ribosomal_L9_C"/>
    <property type="match status" value="1"/>
</dbReference>
<dbReference type="Pfam" id="PF01281">
    <property type="entry name" value="Ribosomal_L9_N"/>
    <property type="match status" value="1"/>
</dbReference>
<dbReference type="SUPFAM" id="SSF55658">
    <property type="entry name" value="L9 N-domain-like"/>
    <property type="match status" value="1"/>
</dbReference>
<dbReference type="SUPFAM" id="SSF55653">
    <property type="entry name" value="Ribosomal protein L9 C-domain"/>
    <property type="match status" value="1"/>
</dbReference>
<dbReference type="PROSITE" id="PS00651">
    <property type="entry name" value="RIBOSOMAL_L9"/>
    <property type="match status" value="1"/>
</dbReference>
<comment type="function">
    <text evidence="1">Binds to the 23S rRNA.</text>
</comment>
<comment type="similarity">
    <text evidence="1">Belongs to the bacterial ribosomal protein bL9 family.</text>
</comment>
<sequence>MQVILLQRVAKLGQMGEVVNVKDGYARNFLLPQGKALRANESNIKSFEARKAQLEAQNLETKKEAAAVAEKLDGQSFVVIRSASDSGALYGSVTTRDAAEAATEAGFTVGRGQIVLDRPIKDLGLHTVTVTLHPEVVVKITLNVARSVEEAELQASGKSIQELAAEAEAAADFEIAELFDEIGAASQED</sequence>
<gene>
    <name evidence="1" type="primary">rplI</name>
    <name type="ordered locus">RHOS4_17470</name>
    <name type="ORF">RSP_0141</name>
</gene>
<proteinExistence type="inferred from homology"/>
<keyword id="KW-1185">Reference proteome</keyword>
<keyword id="KW-0687">Ribonucleoprotein</keyword>
<keyword id="KW-0689">Ribosomal protein</keyword>
<keyword id="KW-0694">RNA-binding</keyword>
<keyword id="KW-0699">rRNA-binding</keyword>
<feature type="chain" id="PRO_0000236577" description="Large ribosomal subunit protein bL9">
    <location>
        <begin position="1"/>
        <end position="189"/>
    </location>
</feature>
<accession>Q3J1L9</accession>
<reference key="1">
    <citation type="submission" date="2005-09" db="EMBL/GenBank/DDBJ databases">
        <title>Complete sequence of chromosome 1 of Rhodobacter sphaeroides 2.4.1.</title>
        <authorList>
            <person name="Copeland A."/>
            <person name="Lucas S."/>
            <person name="Lapidus A."/>
            <person name="Barry K."/>
            <person name="Detter J.C."/>
            <person name="Glavina T."/>
            <person name="Hammon N."/>
            <person name="Israni S."/>
            <person name="Pitluck S."/>
            <person name="Richardson P."/>
            <person name="Mackenzie C."/>
            <person name="Choudhary M."/>
            <person name="Larimer F."/>
            <person name="Hauser L.J."/>
            <person name="Land M."/>
            <person name="Donohue T.J."/>
            <person name="Kaplan S."/>
        </authorList>
    </citation>
    <scope>NUCLEOTIDE SEQUENCE [LARGE SCALE GENOMIC DNA]</scope>
    <source>
        <strain>ATCC 17023 / DSM 158 / JCM 6121 / CCUG 31486 / LMG 2827 / NBRC 12203 / NCIMB 8253 / ATH 2.4.1.</strain>
    </source>
</reference>
<evidence type="ECO:0000255" key="1">
    <source>
        <dbReference type="HAMAP-Rule" id="MF_00503"/>
    </source>
</evidence>
<evidence type="ECO:0000305" key="2"/>